<gene>
    <name type="primary">dlgD</name>
    <name type="synonym">yiaK</name>
    <name type="ordered locus">b3575</name>
    <name type="ordered locus">JW3547</name>
</gene>
<reference key="1">
    <citation type="journal article" date="1994" name="Nucleic Acids Res.">
        <title>Analysis of the Escherichia coli genome. V. DNA sequence of the region from 76.0 to 81.5 minutes.</title>
        <authorList>
            <person name="Sofia H.J."/>
            <person name="Burland V."/>
            <person name="Daniels D.L."/>
            <person name="Plunkett G. III"/>
            <person name="Blattner F.R."/>
        </authorList>
    </citation>
    <scope>NUCLEOTIDE SEQUENCE [LARGE SCALE GENOMIC DNA]</scope>
    <source>
        <strain>K12 / MG1655 / ATCC 47076</strain>
    </source>
</reference>
<reference key="2">
    <citation type="journal article" date="1997" name="Science">
        <title>The complete genome sequence of Escherichia coli K-12.</title>
        <authorList>
            <person name="Blattner F.R."/>
            <person name="Plunkett G. III"/>
            <person name="Bloch C.A."/>
            <person name="Perna N.T."/>
            <person name="Burland V."/>
            <person name="Riley M."/>
            <person name="Collado-Vides J."/>
            <person name="Glasner J.D."/>
            <person name="Rode C.K."/>
            <person name="Mayhew G.F."/>
            <person name="Gregor J."/>
            <person name="Davis N.W."/>
            <person name="Kirkpatrick H.A."/>
            <person name="Goeden M.A."/>
            <person name="Rose D.J."/>
            <person name="Mau B."/>
            <person name="Shao Y."/>
        </authorList>
    </citation>
    <scope>NUCLEOTIDE SEQUENCE [LARGE SCALE GENOMIC DNA]</scope>
    <source>
        <strain>K12 / MG1655 / ATCC 47076</strain>
    </source>
</reference>
<reference key="3">
    <citation type="journal article" date="2006" name="Mol. Syst. Biol.">
        <title>Highly accurate genome sequences of Escherichia coli K-12 strains MG1655 and W3110.</title>
        <authorList>
            <person name="Hayashi K."/>
            <person name="Morooka N."/>
            <person name="Yamamoto Y."/>
            <person name="Fujita K."/>
            <person name="Isono K."/>
            <person name="Choi S."/>
            <person name="Ohtsubo E."/>
            <person name="Baba T."/>
            <person name="Wanner B.L."/>
            <person name="Mori H."/>
            <person name="Horiuchi T."/>
        </authorList>
    </citation>
    <scope>NUCLEOTIDE SEQUENCE [LARGE SCALE GENOMIC DNA]</scope>
    <source>
        <strain>K12 / W3110 / ATCC 27325 / DSM 5911</strain>
    </source>
</reference>
<reference key="4">
    <citation type="journal article" date="1998" name="J. Biol. Chem.">
        <title>A rare 920-kilobase chromosomal inversion mediated by IS1 transposition causes constitutive expression of the yiaK-S operon for carbohydrate utilization in Escherichia coli.</title>
        <authorList>
            <person name="Badia J."/>
            <person name="Ibanez E."/>
            <person name="Sabate M."/>
            <person name="Baldoma L."/>
            <person name="Aguilar J."/>
        </authorList>
    </citation>
    <scope>NUCLEOTIDE SEQUENCE [GENOMIC DNA] OF 1-61</scope>
</reference>
<reference key="5">
    <citation type="journal article" date="2002" name="J. Bacteriol.">
        <title>Utilization of L-ascorbate by Escherichia coli K-12: assignments of functions to products of the yjf-sga and yia-sgb operons.</title>
        <authorList>
            <person name="Yew W.S."/>
            <person name="Gerlt J.A."/>
        </authorList>
    </citation>
    <scope>FUNCTION</scope>
    <source>
        <strain>K12 / MG1655 / ATCC 47076</strain>
    </source>
</reference>
<reference key="6">
    <citation type="journal article" date="2004" name="J. Biol. Chem.">
        <title>A novel NAD-binding protein revealed by the crystal structure of 2,3-diketo-L-gulonate reductase (YiaK).</title>
        <authorList>
            <person name="Forouhar F."/>
            <person name="Lee I."/>
            <person name="Benach J."/>
            <person name="Kulkarni K."/>
            <person name="Xiao R."/>
            <person name="Acton T.B."/>
            <person name="Montelione G.T."/>
            <person name="Tong L."/>
        </authorList>
    </citation>
    <scope>X-RAY CRYSTALLOGRAPHY (1.8 ANGSTROMS) OF NATIVE PROTEIN AND COMPLEX WITH NAD AND TARTRATE</scope>
    <scope>SUBUNIT</scope>
</reference>
<accession>P37672</accession>
<accession>P76716</accession>
<accession>Q2M7N8</accession>
<protein>
    <recommendedName>
        <fullName>2,3-diketo-L-gulonate reductase</fullName>
        <shortName>2,3-DKG reductase</shortName>
        <ecNumber>1.1.1.130</ecNumber>
    </recommendedName>
    <alternativeName>
        <fullName>3-dehydro-L-gulonate 2-dehydrogenase</fullName>
    </alternativeName>
</protein>
<sequence>MKVTFEQLKAAFNRVLISRGVDSETADACAEMFARTTESGVYSHGVNRFPRFIQQLENGDIIPDAQPKRITSLGAIEQWDAQRSIGNLTAKKMMDRAIELAADHGIGLVALRNANHWMRGGSYGWQAAEKGYIGICWTNSIAVMPPWGAKECRIGTNPLIVAIPSTPITMVDMSMSMFSYGMLEVNRLAGRQLPVDGGFDDEGNLTKEPGVIEKNRRILPMGYWKGSGMSIVLDMIATLLSDGASVAEVTQDNSDEYGISQIFIAIEVDKLIDGPTRDAKLQRIMDYVTSAERADENQAIRLPGHEFTTLLAENRRNGITVDDSVWAKIQAL</sequence>
<feature type="chain" id="PRO_0000083830" description="2,3-diketo-L-gulonate reductase">
    <location>
        <begin position="1"/>
        <end position="332"/>
    </location>
</feature>
<feature type="active site" description="Proton donor" evidence="3">
    <location>
        <position position="44"/>
    </location>
</feature>
<feature type="binding site">
    <location>
        <begin position="168"/>
        <end position="174"/>
    </location>
    <ligand>
        <name>NAD(+)</name>
        <dbReference type="ChEBI" id="CHEBI:57540"/>
    </ligand>
</feature>
<feature type="binding site">
    <location>
        <begin position="224"/>
        <end position="225"/>
    </location>
    <ligand>
        <name>NAD(+)</name>
        <dbReference type="ChEBI" id="CHEBI:57540"/>
    </ligand>
</feature>
<feature type="binding site">
    <location>
        <begin position="304"/>
        <end position="306"/>
    </location>
    <ligand>
        <name>NAD(+)</name>
        <dbReference type="ChEBI" id="CHEBI:57540"/>
    </ligand>
</feature>
<feature type="helix" evidence="4">
    <location>
        <begin position="5"/>
        <end position="18"/>
    </location>
</feature>
<feature type="helix" evidence="4">
    <location>
        <begin position="23"/>
        <end position="38"/>
    </location>
</feature>
<feature type="turn" evidence="4">
    <location>
        <begin position="43"/>
        <end position="45"/>
    </location>
</feature>
<feature type="helix" evidence="4">
    <location>
        <begin position="46"/>
        <end position="48"/>
    </location>
</feature>
<feature type="helix" evidence="4">
    <location>
        <begin position="49"/>
        <end position="57"/>
    </location>
</feature>
<feature type="strand" evidence="4">
    <location>
        <begin position="68"/>
        <end position="73"/>
    </location>
</feature>
<feature type="strand" evidence="4">
    <location>
        <begin position="76"/>
        <end position="80"/>
    </location>
</feature>
<feature type="helix" evidence="4">
    <location>
        <begin position="86"/>
        <end position="104"/>
    </location>
</feature>
<feature type="strand" evidence="4">
    <location>
        <begin position="105"/>
        <end position="114"/>
    </location>
</feature>
<feature type="helix" evidence="4">
    <location>
        <begin position="121"/>
        <end position="129"/>
    </location>
</feature>
<feature type="strand" evidence="4">
    <location>
        <begin position="133"/>
        <end position="138"/>
    </location>
</feature>
<feature type="strand" evidence="4">
    <location>
        <begin position="149"/>
        <end position="151"/>
    </location>
</feature>
<feature type="strand" evidence="4">
    <location>
        <begin position="159"/>
        <end position="163"/>
    </location>
</feature>
<feature type="strand" evidence="4">
    <location>
        <begin position="169"/>
        <end position="173"/>
    </location>
</feature>
<feature type="strand" evidence="4">
    <location>
        <begin position="175"/>
        <end position="178"/>
    </location>
</feature>
<feature type="helix" evidence="4">
    <location>
        <begin position="180"/>
        <end position="188"/>
    </location>
</feature>
<feature type="strand" evidence="4">
    <location>
        <begin position="203"/>
        <end position="206"/>
    </location>
</feature>
<feature type="helix" evidence="4">
    <location>
        <begin position="209"/>
        <end position="215"/>
    </location>
</feature>
<feature type="turn" evidence="4">
    <location>
        <begin position="221"/>
        <end position="223"/>
    </location>
</feature>
<feature type="helix" evidence="4">
    <location>
        <begin position="224"/>
        <end position="241"/>
    </location>
</feature>
<feature type="helix" evidence="4">
    <location>
        <begin position="246"/>
        <end position="252"/>
    </location>
</feature>
<feature type="strand" evidence="4">
    <location>
        <begin position="254"/>
        <end position="256"/>
    </location>
</feature>
<feature type="strand" evidence="4">
    <location>
        <begin position="258"/>
        <end position="266"/>
    </location>
</feature>
<feature type="turn" evidence="4">
    <location>
        <begin position="269"/>
        <end position="271"/>
    </location>
</feature>
<feature type="helix" evidence="4">
    <location>
        <begin position="274"/>
        <end position="289"/>
    </location>
</feature>
<feature type="strand" evidence="4">
    <location>
        <begin position="293"/>
        <end position="295"/>
    </location>
</feature>
<feature type="turn" evidence="4">
    <location>
        <begin position="303"/>
        <end position="305"/>
    </location>
</feature>
<feature type="helix" evidence="4">
    <location>
        <begin position="306"/>
        <end position="317"/>
    </location>
</feature>
<feature type="helix" evidence="4">
    <location>
        <begin position="323"/>
        <end position="331"/>
    </location>
</feature>
<organism>
    <name type="scientific">Escherichia coli (strain K12)</name>
    <dbReference type="NCBI Taxonomy" id="83333"/>
    <lineage>
        <taxon>Bacteria</taxon>
        <taxon>Pseudomonadati</taxon>
        <taxon>Pseudomonadota</taxon>
        <taxon>Gammaproteobacteria</taxon>
        <taxon>Enterobacterales</taxon>
        <taxon>Enterobacteriaceae</taxon>
        <taxon>Escherichia</taxon>
    </lineage>
</organism>
<proteinExistence type="evidence at protein level"/>
<comment type="function">
    <text evidence="1">Catalyzes the reduction of 2,3-diketo-L-gulonate in the presence of NADH, to form 3-keto-L-gulonate.</text>
</comment>
<comment type="catalytic activity">
    <reaction>
        <text>3-dehydro-L-gulonate + NAD(+) = 2,3-dioxo-L-gulonate + NADH + H(+)</text>
        <dbReference type="Rhea" id="RHEA:21924"/>
        <dbReference type="ChEBI" id="CHEBI:15378"/>
        <dbReference type="ChEBI" id="CHEBI:57441"/>
        <dbReference type="ChEBI" id="CHEBI:57540"/>
        <dbReference type="ChEBI" id="CHEBI:57655"/>
        <dbReference type="ChEBI" id="CHEBI:57945"/>
        <dbReference type="EC" id="1.1.1.130"/>
    </reaction>
</comment>
<comment type="catalytic activity">
    <reaction>
        <text>3-dehydro-L-gulonate + NADP(+) = 2,3-dioxo-L-gulonate + NADPH + H(+)</text>
        <dbReference type="Rhea" id="RHEA:21928"/>
        <dbReference type="ChEBI" id="CHEBI:15378"/>
        <dbReference type="ChEBI" id="CHEBI:57441"/>
        <dbReference type="ChEBI" id="CHEBI:57655"/>
        <dbReference type="ChEBI" id="CHEBI:57783"/>
        <dbReference type="ChEBI" id="CHEBI:58349"/>
        <dbReference type="EC" id="1.1.1.130"/>
    </reaction>
</comment>
<comment type="activity regulation">
    <text>The enzyme is inhibited by tartrate and D-malate.</text>
</comment>
<comment type="subunit">
    <text evidence="2">Homodimer.</text>
</comment>
<comment type="subcellular location">
    <subcellularLocation>
        <location evidence="3">Cytoplasm</location>
    </subcellularLocation>
</comment>
<comment type="miscellaneous">
    <text>NAD is bound in an unusual conformation, at the interface of a dimer of the enzyme.</text>
</comment>
<comment type="similarity">
    <text evidence="3">Belongs to the LDH2/MDH2 oxidoreductase family. DlgD subfamily.</text>
</comment>
<name>DLGD_ECOLI</name>
<dbReference type="EC" id="1.1.1.130"/>
<dbReference type="EMBL" id="U00039">
    <property type="protein sequence ID" value="AAB18552.1"/>
    <property type="molecule type" value="Genomic_DNA"/>
</dbReference>
<dbReference type="EMBL" id="U00096">
    <property type="protein sequence ID" value="AAC76599.1"/>
    <property type="molecule type" value="Genomic_DNA"/>
</dbReference>
<dbReference type="EMBL" id="AP009048">
    <property type="protein sequence ID" value="BAE77718.1"/>
    <property type="molecule type" value="Genomic_DNA"/>
</dbReference>
<dbReference type="EMBL" id="AJ223475">
    <property type="protein sequence ID" value="CAA11398.1"/>
    <property type="molecule type" value="Genomic_DNA"/>
</dbReference>
<dbReference type="PIR" id="A65157">
    <property type="entry name" value="A65157"/>
</dbReference>
<dbReference type="RefSeq" id="NP_418032.1">
    <property type="nucleotide sequence ID" value="NC_000913.3"/>
</dbReference>
<dbReference type="RefSeq" id="WP_000869037.1">
    <property type="nucleotide sequence ID" value="NZ_SSZK01000041.1"/>
</dbReference>
<dbReference type="PDB" id="1NXU">
    <property type="method" value="X-ray"/>
    <property type="resolution" value="1.80 A"/>
    <property type="chains" value="A/B=1-332"/>
</dbReference>
<dbReference type="PDB" id="1S20">
    <property type="method" value="X-ray"/>
    <property type="resolution" value="2.20 A"/>
    <property type="chains" value="A/B/C/D/E/F/G/H=1-332"/>
</dbReference>
<dbReference type="PDBsum" id="1NXU"/>
<dbReference type="PDBsum" id="1S20"/>
<dbReference type="SMR" id="P37672"/>
<dbReference type="BioGRID" id="4262546">
    <property type="interactions" value="12"/>
</dbReference>
<dbReference type="FunCoup" id="P37672">
    <property type="interactions" value="117"/>
</dbReference>
<dbReference type="STRING" id="511145.b3575"/>
<dbReference type="DrugBank" id="DB01694">
    <property type="generic name" value="D-tartaric acid"/>
</dbReference>
<dbReference type="PaxDb" id="511145-b3575"/>
<dbReference type="DNASU" id="948096"/>
<dbReference type="EnsemblBacteria" id="AAC76599">
    <property type="protein sequence ID" value="AAC76599"/>
    <property type="gene ID" value="b3575"/>
</dbReference>
<dbReference type="GeneID" id="948096"/>
<dbReference type="KEGG" id="ecj:JW3547"/>
<dbReference type="KEGG" id="eco:b3575"/>
<dbReference type="KEGG" id="ecoc:C3026_19385"/>
<dbReference type="PATRIC" id="fig|1411691.4.peg.3137"/>
<dbReference type="EchoBASE" id="EB2187"/>
<dbReference type="eggNOG" id="COG2055">
    <property type="taxonomic scope" value="Bacteria"/>
</dbReference>
<dbReference type="HOGENOM" id="CLU_040452_4_0_6"/>
<dbReference type="InParanoid" id="P37672"/>
<dbReference type="OMA" id="GEVGDQY"/>
<dbReference type="OrthoDB" id="9811519at2"/>
<dbReference type="PhylomeDB" id="P37672"/>
<dbReference type="BioCyc" id="EcoCyc:EG12279-MONOMER"/>
<dbReference type="BioCyc" id="MetaCyc:EG12279-MONOMER"/>
<dbReference type="EvolutionaryTrace" id="P37672"/>
<dbReference type="PRO" id="PR:P37672"/>
<dbReference type="Proteomes" id="UP000000625">
    <property type="component" value="Chromosome"/>
</dbReference>
<dbReference type="GO" id="GO:0005737">
    <property type="term" value="C:cytoplasm"/>
    <property type="evidence" value="ECO:0007669"/>
    <property type="project" value="UniProtKB-SubCell"/>
</dbReference>
<dbReference type="GO" id="GO:0047559">
    <property type="term" value="F:3-dehydro-L-gulonate 2-dehydrogenase activity"/>
    <property type="evidence" value="ECO:0007669"/>
    <property type="project" value="UniProtKB-UniRule"/>
</dbReference>
<dbReference type="GO" id="GO:0070403">
    <property type="term" value="F:NAD+ binding"/>
    <property type="evidence" value="ECO:0007669"/>
    <property type="project" value="InterPro"/>
</dbReference>
<dbReference type="GO" id="GO:0016616">
    <property type="term" value="F:oxidoreductase activity, acting on the CH-OH group of donors, NAD or NADP as acceptor"/>
    <property type="evidence" value="ECO:0000314"/>
    <property type="project" value="EcoCyc"/>
</dbReference>
<dbReference type="FunFam" id="1.10.1530.10:FF:000001">
    <property type="entry name" value="2,3-diketo-L-gulonate reductase"/>
    <property type="match status" value="1"/>
</dbReference>
<dbReference type="Gene3D" id="1.10.1530.10">
    <property type="match status" value="1"/>
</dbReference>
<dbReference type="Gene3D" id="3.30.1370.60">
    <property type="entry name" value="Hypothetical oxidoreductase yiak, domain 2"/>
    <property type="match status" value="1"/>
</dbReference>
<dbReference type="Gene3D" id="3.30.60.50">
    <property type="entry name" value="Hypothetical oxidoreductase yiak, domain 3"/>
    <property type="match status" value="1"/>
</dbReference>
<dbReference type="HAMAP" id="MF_00820">
    <property type="entry name" value="Diketo_gul_reduc"/>
    <property type="match status" value="1"/>
</dbReference>
<dbReference type="InterPro" id="IPR023689">
    <property type="entry name" value="Diketo_gul_Rdtase"/>
</dbReference>
<dbReference type="InterPro" id="IPR043144">
    <property type="entry name" value="Mal/L-sulf/L-lact_DH-like_ah"/>
</dbReference>
<dbReference type="InterPro" id="IPR043143">
    <property type="entry name" value="Mal/L-sulf/L-lact_DH-like_NADP"/>
</dbReference>
<dbReference type="InterPro" id="IPR036111">
    <property type="entry name" value="Mal/L-sulfo/L-lacto_DH-like_sf"/>
</dbReference>
<dbReference type="InterPro" id="IPR003767">
    <property type="entry name" value="Malate/L-lactate_DH-like"/>
</dbReference>
<dbReference type="NCBIfam" id="NF009750">
    <property type="entry name" value="PRK13260.1"/>
    <property type="match status" value="1"/>
</dbReference>
<dbReference type="PANTHER" id="PTHR11091:SF3">
    <property type="entry name" value="2,3-DIKETO-L-GULONATE REDUCTASE"/>
    <property type="match status" value="1"/>
</dbReference>
<dbReference type="PANTHER" id="PTHR11091">
    <property type="entry name" value="OXIDOREDUCTASE-RELATED"/>
    <property type="match status" value="1"/>
</dbReference>
<dbReference type="Pfam" id="PF02615">
    <property type="entry name" value="Ldh_2"/>
    <property type="match status" value="1"/>
</dbReference>
<dbReference type="SUPFAM" id="SSF89733">
    <property type="entry name" value="L-sulfolactate dehydrogenase-like"/>
    <property type="match status" value="1"/>
</dbReference>
<evidence type="ECO:0000269" key="1">
    <source>
    </source>
</evidence>
<evidence type="ECO:0000269" key="2">
    <source>
    </source>
</evidence>
<evidence type="ECO:0000305" key="3"/>
<evidence type="ECO:0007829" key="4">
    <source>
        <dbReference type="PDB" id="1NXU"/>
    </source>
</evidence>
<keyword id="KW-0002">3D-structure</keyword>
<keyword id="KW-0963">Cytoplasm</keyword>
<keyword id="KW-0520">NAD</keyword>
<keyword id="KW-0560">Oxidoreductase</keyword>
<keyword id="KW-1185">Reference proteome</keyword>